<gene>
    <name type="primary">atpI</name>
    <name type="ordered locus">CT_305</name>
</gene>
<proteinExistence type="inferred from homology"/>
<evidence type="ECO:0000255" key="1"/>
<evidence type="ECO:0000305" key="2"/>
<name>VATI_CHLTR</name>
<organism>
    <name type="scientific">Chlamydia trachomatis serovar D (strain ATCC VR-885 / DSM 19411 / UW-3/Cx)</name>
    <dbReference type="NCBI Taxonomy" id="272561"/>
    <lineage>
        <taxon>Bacteria</taxon>
        <taxon>Pseudomonadati</taxon>
        <taxon>Chlamydiota</taxon>
        <taxon>Chlamydiia</taxon>
        <taxon>Chlamydiales</taxon>
        <taxon>Chlamydiaceae</taxon>
        <taxon>Chlamydia/Chlamydophila group</taxon>
        <taxon>Chlamydia</taxon>
    </lineage>
</organism>
<accession>O84307</accession>
<feature type="chain" id="PRO_0000119240" description="V-type ATP synthase subunit I">
    <location>
        <begin position="1"/>
        <end position="649"/>
    </location>
</feature>
<feature type="transmembrane region" description="Helical" evidence="1">
    <location>
        <begin position="312"/>
        <end position="332"/>
    </location>
</feature>
<feature type="transmembrane region" description="Helical" evidence="1">
    <location>
        <begin position="360"/>
        <end position="380"/>
    </location>
</feature>
<feature type="transmembrane region" description="Helical" evidence="1">
    <location>
        <begin position="453"/>
        <end position="473"/>
    </location>
</feature>
<feature type="transmembrane region" description="Helical" evidence="1">
    <location>
        <begin position="485"/>
        <end position="505"/>
    </location>
</feature>
<feature type="transmembrane region" description="Helical" evidence="1">
    <location>
        <begin position="520"/>
        <end position="540"/>
    </location>
</feature>
<feature type="transmembrane region" description="Helical" evidence="1">
    <location>
        <begin position="556"/>
        <end position="576"/>
    </location>
</feature>
<feature type="transmembrane region" description="Helical" evidence="1">
    <location>
        <begin position="593"/>
        <end position="613"/>
    </location>
</feature>
<protein>
    <recommendedName>
        <fullName>V-type ATP synthase subunit I</fullName>
    </recommendedName>
    <alternativeName>
        <fullName>V-ATPase subunit I</fullName>
    </alternativeName>
</protein>
<keyword id="KW-1003">Cell membrane</keyword>
<keyword id="KW-0375">Hydrogen ion transport</keyword>
<keyword id="KW-0406">Ion transport</keyword>
<keyword id="KW-0472">Membrane</keyword>
<keyword id="KW-1185">Reference proteome</keyword>
<keyword id="KW-0812">Transmembrane</keyword>
<keyword id="KW-1133">Transmembrane helix</keyword>
<keyword id="KW-0813">Transport</keyword>
<dbReference type="EMBL" id="AE001273">
    <property type="protein sequence ID" value="AAC67898.1"/>
    <property type="molecule type" value="Genomic_DNA"/>
</dbReference>
<dbReference type="PIR" id="G71530">
    <property type="entry name" value="G71530"/>
</dbReference>
<dbReference type="RefSeq" id="NP_219810.1">
    <property type="nucleotide sequence ID" value="NC_000117.1"/>
</dbReference>
<dbReference type="RefSeq" id="WP_010725153.1">
    <property type="nucleotide sequence ID" value="NC_000117.1"/>
</dbReference>
<dbReference type="STRING" id="272561.CT_305"/>
<dbReference type="EnsemblBacteria" id="AAC67898">
    <property type="protein sequence ID" value="AAC67898"/>
    <property type="gene ID" value="CT_305"/>
</dbReference>
<dbReference type="GeneID" id="884819"/>
<dbReference type="KEGG" id="ctr:CT_305"/>
<dbReference type="PATRIC" id="fig|272561.5.peg.326"/>
<dbReference type="HOGENOM" id="CLU_025558_1_1_0"/>
<dbReference type="InParanoid" id="O84307"/>
<dbReference type="OrthoDB" id="9803814at2"/>
<dbReference type="Proteomes" id="UP000000431">
    <property type="component" value="Chromosome"/>
</dbReference>
<dbReference type="GO" id="GO:0005886">
    <property type="term" value="C:plasma membrane"/>
    <property type="evidence" value="ECO:0007669"/>
    <property type="project" value="UniProtKB-SubCell"/>
</dbReference>
<dbReference type="GO" id="GO:0033179">
    <property type="term" value="C:proton-transporting V-type ATPase, V0 domain"/>
    <property type="evidence" value="ECO:0007669"/>
    <property type="project" value="InterPro"/>
</dbReference>
<dbReference type="GO" id="GO:0016471">
    <property type="term" value="C:vacuolar proton-transporting V-type ATPase complex"/>
    <property type="evidence" value="ECO:0000318"/>
    <property type="project" value="GO_Central"/>
</dbReference>
<dbReference type="GO" id="GO:0051117">
    <property type="term" value="F:ATPase binding"/>
    <property type="evidence" value="ECO:0000318"/>
    <property type="project" value="GO_Central"/>
</dbReference>
<dbReference type="GO" id="GO:0046961">
    <property type="term" value="F:proton-transporting ATPase activity, rotational mechanism"/>
    <property type="evidence" value="ECO:0007669"/>
    <property type="project" value="InterPro"/>
</dbReference>
<dbReference type="GO" id="GO:0007035">
    <property type="term" value="P:vacuolar acidification"/>
    <property type="evidence" value="ECO:0000318"/>
    <property type="project" value="GO_Central"/>
</dbReference>
<dbReference type="InterPro" id="IPR002490">
    <property type="entry name" value="V-ATPase_116kDa_su"/>
</dbReference>
<dbReference type="NCBIfam" id="NF004431">
    <property type="entry name" value="PRK05771.2-5"/>
    <property type="match status" value="1"/>
</dbReference>
<dbReference type="PANTHER" id="PTHR11629:SF63">
    <property type="entry name" value="V-TYPE PROTON ATPASE SUBUNIT A"/>
    <property type="match status" value="1"/>
</dbReference>
<dbReference type="PANTHER" id="PTHR11629">
    <property type="entry name" value="VACUOLAR PROTON ATPASES"/>
    <property type="match status" value="1"/>
</dbReference>
<reference key="1">
    <citation type="journal article" date="1998" name="Science">
        <title>Genome sequence of an obligate intracellular pathogen of humans: Chlamydia trachomatis.</title>
        <authorList>
            <person name="Stephens R.S."/>
            <person name="Kalman S."/>
            <person name="Lammel C.J."/>
            <person name="Fan J."/>
            <person name="Marathe R."/>
            <person name="Aravind L."/>
            <person name="Mitchell W.P."/>
            <person name="Olinger L."/>
            <person name="Tatusov R.L."/>
            <person name="Zhao Q."/>
            <person name="Koonin E.V."/>
            <person name="Davis R.W."/>
        </authorList>
    </citation>
    <scope>NUCLEOTIDE SEQUENCE [LARGE SCALE GENOMIC DNA]</scope>
    <source>
        <strain>ATCC VR-885 / DSM 19411 / UW-3/Cx</strain>
    </source>
</reference>
<sequence>MRVDVDKYLFIGREKSEFFSACREIGAVEFLSKSKLKDSEKVRKLSEGLKVLNLLTKSCSPADLVSTKSGYLVTEQLLQEIFDLNQEITTLTESLKALGKEIVRVKPLGDFSSEEIRELTLKTGLAVRFLYKRHIEGAPLEVEEENVFYLATAYNYDYYAVIGIVSLSKDIFTEIEAPRSVNELREEEGHLQALLRKKKARVCELYAYREDLLEALCEQCNEQSLQHAEVSAEDLFDDKVFSALGWVIVDRLDEVKKLCDSLGIYLERVQPDPDEVIPTYLENHGLGALGESLVNIYDTPASTDKDPSLWVFFSFFVFFSMIINDAGYGLVFLATSLFLSFKARKQIKRSIALKRFLQMFMILGLGCVCWGGATTSFFGVSVSYTSPFREYSLTHFLALKKAEYYLKERPKGYKELVHDYPILKEKKTPKEFLLAQSTSSGDSVYKAVVYDKFIDNILMEIALLVGVVHLSLGMLRYCRQRYSSIGWVIFMCGAYMYLPIYLQAVSLIHYALHIPYELGGLVGYYVAFIGLGVAILGGVIQRGLRGLDEITAVIQVFSDVLSYLRLYALSLAGAMVGNTVMVMSERFSPAVGILIIIFGHTVNIALSIMGGVIHGLRLNFIEWYHYSFDGGGKLLHPLKKVICQKSQNL</sequence>
<comment type="function">
    <text>Produces ATP from ADP in the presence of a proton gradient across the membrane.</text>
</comment>
<comment type="subcellular location">
    <subcellularLocation>
        <location evidence="2">Cell membrane</location>
        <topology evidence="2">Multi-pass membrane protein</topology>
    </subcellularLocation>
</comment>
<comment type="similarity">
    <text evidence="2">Belongs to the V-ATPase 116 kDa subunit family.</text>
</comment>